<evidence type="ECO:0000255" key="1">
    <source>
        <dbReference type="HAMAP-Rule" id="MF_01662"/>
    </source>
</evidence>
<name>FUCM_HAEIE</name>
<organism>
    <name type="scientific">Haemophilus influenzae (strain PittEE)</name>
    <dbReference type="NCBI Taxonomy" id="374930"/>
    <lineage>
        <taxon>Bacteria</taxon>
        <taxon>Pseudomonadati</taxon>
        <taxon>Pseudomonadota</taxon>
        <taxon>Gammaproteobacteria</taxon>
        <taxon>Pasteurellales</taxon>
        <taxon>Pasteurellaceae</taxon>
        <taxon>Haemophilus</taxon>
    </lineage>
</organism>
<keyword id="KW-0119">Carbohydrate metabolism</keyword>
<keyword id="KW-0963">Cytoplasm</keyword>
<keyword id="KW-0294">Fucose metabolism</keyword>
<keyword id="KW-0413">Isomerase</keyword>
<feature type="chain" id="PRO_0000344547" description="L-fucose mutarotase">
    <location>
        <begin position="1"/>
        <end position="144"/>
    </location>
</feature>
<feature type="active site" description="Proton donor" evidence="1">
    <location>
        <position position="22"/>
    </location>
</feature>
<feature type="binding site" evidence="1">
    <location>
        <position position="30"/>
    </location>
    <ligand>
        <name>substrate</name>
    </ligand>
</feature>
<feature type="binding site" evidence="1">
    <location>
        <position position="109"/>
    </location>
    <ligand>
        <name>substrate</name>
    </ligand>
</feature>
<feature type="binding site" evidence="1">
    <location>
        <begin position="131"/>
        <end position="133"/>
    </location>
    <ligand>
        <name>substrate</name>
    </ligand>
</feature>
<protein>
    <recommendedName>
        <fullName evidence="1">L-fucose mutarotase</fullName>
        <ecNumber evidence="1">5.1.3.29</ecNumber>
    </recommendedName>
    <alternativeName>
        <fullName evidence="1">Fucose 1-epimerase</fullName>
    </alternativeName>
    <alternativeName>
        <fullName evidence="1">Type-2 mutarotase</fullName>
    </alternativeName>
</protein>
<reference key="1">
    <citation type="journal article" date="2007" name="Genome Biol.">
        <title>Characterization and modeling of the Haemophilus influenzae core and supragenomes based on the complete genomic sequences of Rd and 12 clinical nontypeable strains.</title>
        <authorList>
            <person name="Hogg J.S."/>
            <person name="Hu F.Z."/>
            <person name="Janto B."/>
            <person name="Boissy R."/>
            <person name="Hayes J."/>
            <person name="Keefe R."/>
            <person name="Post J.C."/>
            <person name="Ehrlich G.D."/>
        </authorList>
    </citation>
    <scope>NUCLEOTIDE SEQUENCE [LARGE SCALE GENOMIC DNA]</scope>
    <source>
        <strain>PittEE</strain>
    </source>
</reference>
<sequence length="144" mass="15780">MLKGIHPALSPELLKTLAEMGHGDEIVLADTHFPAHSLHKNVIRADGISIDILLEAITPLFEFDAYVDAPLLMMKAVEGDSLDPNVETRYLNAIESAVGFTPNLTCLERFDFYTRAKQAYAVVVSGEIAKYGNIIIKKGVTPIL</sequence>
<gene>
    <name evidence="1" type="primary">fucU</name>
    <name type="ordered locus">CGSHiEE_02040</name>
</gene>
<accession>A5UAS6</accession>
<proteinExistence type="inferred from homology"/>
<comment type="function">
    <text evidence="1">Involved in the anomeric conversion of L-fucose.</text>
</comment>
<comment type="catalytic activity">
    <reaction evidence="1">
        <text>alpha-L-fucose = beta-L-fucose</text>
        <dbReference type="Rhea" id="RHEA:25580"/>
        <dbReference type="ChEBI" id="CHEBI:42548"/>
        <dbReference type="ChEBI" id="CHEBI:42589"/>
        <dbReference type="EC" id="5.1.3.29"/>
    </reaction>
</comment>
<comment type="pathway">
    <text evidence="1">Carbohydrate metabolism; L-fucose metabolism.</text>
</comment>
<comment type="subunit">
    <text evidence="1">Homodecamer.</text>
</comment>
<comment type="subcellular location">
    <subcellularLocation>
        <location evidence="1">Cytoplasm</location>
    </subcellularLocation>
</comment>
<comment type="similarity">
    <text evidence="1">Belongs to the RbsD / FucU family. FucU mutarotase subfamily.</text>
</comment>
<dbReference type="EC" id="5.1.3.29" evidence="1"/>
<dbReference type="EMBL" id="CP000671">
    <property type="protein sequence ID" value="ABQ97877.1"/>
    <property type="molecule type" value="Genomic_DNA"/>
</dbReference>
<dbReference type="SMR" id="A5UAS6"/>
<dbReference type="KEGG" id="hip:CGSHiEE_02040"/>
<dbReference type="HOGENOM" id="CLU_120075_1_0_6"/>
<dbReference type="UniPathway" id="UPA00956"/>
<dbReference type="GO" id="GO:0005737">
    <property type="term" value="C:cytoplasm"/>
    <property type="evidence" value="ECO:0007669"/>
    <property type="project" value="UniProtKB-SubCell"/>
</dbReference>
<dbReference type="GO" id="GO:0042806">
    <property type="term" value="F:fucose binding"/>
    <property type="evidence" value="ECO:0007669"/>
    <property type="project" value="InterPro"/>
</dbReference>
<dbReference type="GO" id="GO:0036373">
    <property type="term" value="F:L-fucose mutarotase activity"/>
    <property type="evidence" value="ECO:0007669"/>
    <property type="project" value="UniProtKB-EC"/>
</dbReference>
<dbReference type="GO" id="GO:0036065">
    <property type="term" value="P:fucosylation"/>
    <property type="evidence" value="ECO:0007669"/>
    <property type="project" value="TreeGrafter"/>
</dbReference>
<dbReference type="GO" id="GO:0042354">
    <property type="term" value="P:L-fucose metabolic process"/>
    <property type="evidence" value="ECO:0007669"/>
    <property type="project" value="UniProtKB-UniRule"/>
</dbReference>
<dbReference type="Gene3D" id="3.40.1650.10">
    <property type="entry name" value="RbsD-like domain"/>
    <property type="match status" value="1"/>
</dbReference>
<dbReference type="HAMAP" id="MF_01662">
    <property type="entry name" value="L_fucose_rotase"/>
    <property type="match status" value="1"/>
</dbReference>
<dbReference type="InterPro" id="IPR023751">
    <property type="entry name" value="L-fucose_mutarotase"/>
</dbReference>
<dbReference type="InterPro" id="IPR023750">
    <property type="entry name" value="RbsD-like_sf"/>
</dbReference>
<dbReference type="InterPro" id="IPR050443">
    <property type="entry name" value="RbsD/FucU_mutarotase"/>
</dbReference>
<dbReference type="InterPro" id="IPR007721">
    <property type="entry name" value="RbsD_FucU"/>
</dbReference>
<dbReference type="NCBIfam" id="NF011949">
    <property type="entry name" value="PRK15420.1"/>
    <property type="match status" value="1"/>
</dbReference>
<dbReference type="PANTHER" id="PTHR31690">
    <property type="entry name" value="FUCOSE MUTAROTASE"/>
    <property type="match status" value="1"/>
</dbReference>
<dbReference type="PANTHER" id="PTHR31690:SF4">
    <property type="entry name" value="FUCOSE MUTAROTASE"/>
    <property type="match status" value="1"/>
</dbReference>
<dbReference type="Pfam" id="PF05025">
    <property type="entry name" value="RbsD_FucU"/>
    <property type="match status" value="1"/>
</dbReference>
<dbReference type="SUPFAM" id="SSF102546">
    <property type="entry name" value="RbsD-like"/>
    <property type="match status" value="1"/>
</dbReference>